<accession>C6CE57</accession>
<comment type="function">
    <text evidence="1">Modulates the activity of the EnvZ/OmpR two-component regulatory system, probably by directly modulating EnvZ enzymatic activity and increasing stability of phosphorylated OmpR.</text>
</comment>
<comment type="subunit">
    <text evidence="1">Interacts with EnvZ.</text>
</comment>
<comment type="subcellular location">
    <subcellularLocation>
        <location evidence="1">Cell inner membrane</location>
        <topology evidence="1">Single-pass membrane protein</topology>
    </subcellularLocation>
</comment>
<comment type="similarity">
    <text evidence="1">Belongs to the MzrA family.</text>
</comment>
<name>MZRA_MUSP7</name>
<protein>
    <recommendedName>
        <fullName evidence="1">Modulator protein MzrA</fullName>
    </recommendedName>
</protein>
<evidence type="ECO:0000255" key="1">
    <source>
        <dbReference type="HAMAP-Rule" id="MF_00904"/>
    </source>
</evidence>
<organism>
    <name type="scientific">Musicola paradisiaca (strain Ech703)</name>
    <name type="common">Dickeya paradisiaca</name>
    <name type="synonym">Dickeya dadantii</name>
    <dbReference type="NCBI Taxonomy" id="579405"/>
    <lineage>
        <taxon>Bacteria</taxon>
        <taxon>Pseudomonadati</taxon>
        <taxon>Pseudomonadota</taxon>
        <taxon>Gammaproteobacteria</taxon>
        <taxon>Enterobacterales</taxon>
        <taxon>Pectobacteriaceae</taxon>
        <taxon>Musicola</taxon>
    </lineage>
</organism>
<dbReference type="EMBL" id="CP001654">
    <property type="protein sequence ID" value="ACS87151.1"/>
    <property type="molecule type" value="Genomic_DNA"/>
</dbReference>
<dbReference type="RefSeq" id="WP_015855050.1">
    <property type="nucleotide sequence ID" value="NC_012880.1"/>
</dbReference>
<dbReference type="SMR" id="C6CE57"/>
<dbReference type="STRING" id="579405.Dd703_3389"/>
<dbReference type="KEGG" id="dda:Dd703_3389"/>
<dbReference type="eggNOG" id="ENOG50333DY">
    <property type="taxonomic scope" value="Bacteria"/>
</dbReference>
<dbReference type="HOGENOM" id="CLU_153761_1_0_6"/>
<dbReference type="Proteomes" id="UP000002734">
    <property type="component" value="Chromosome"/>
</dbReference>
<dbReference type="GO" id="GO:0005886">
    <property type="term" value="C:plasma membrane"/>
    <property type="evidence" value="ECO:0007669"/>
    <property type="project" value="UniProtKB-SubCell"/>
</dbReference>
<dbReference type="GO" id="GO:0019901">
    <property type="term" value="F:protein kinase binding"/>
    <property type="evidence" value="ECO:0007669"/>
    <property type="project" value="UniProtKB-UniRule"/>
</dbReference>
<dbReference type="Gene3D" id="3.30.70.260">
    <property type="match status" value="1"/>
</dbReference>
<dbReference type="HAMAP" id="MF_00904">
    <property type="entry name" value="Modulator_MzrA"/>
    <property type="match status" value="1"/>
</dbReference>
<dbReference type="InterPro" id="IPR026574">
    <property type="entry name" value="Modulator_MzrA"/>
</dbReference>
<dbReference type="InterPro" id="IPR027398">
    <property type="entry name" value="SecD-TM"/>
</dbReference>
<dbReference type="NCBIfam" id="NF007915">
    <property type="entry name" value="PRK10629.1"/>
    <property type="match status" value="1"/>
</dbReference>
<dbReference type="Pfam" id="PF13721">
    <property type="entry name" value="SecD-TM1"/>
    <property type="match status" value="1"/>
</dbReference>
<keyword id="KW-0997">Cell inner membrane</keyword>
<keyword id="KW-1003">Cell membrane</keyword>
<keyword id="KW-0472">Membrane</keyword>
<keyword id="KW-0812">Transmembrane</keyword>
<keyword id="KW-1133">Transmembrane helix</keyword>
<proteinExistence type="inferred from homology"/>
<reference key="1">
    <citation type="submission" date="2009-06" db="EMBL/GenBank/DDBJ databases">
        <title>Complete sequence of Dickeya dadantii Ech703.</title>
        <authorList>
            <consortium name="US DOE Joint Genome Institute"/>
            <person name="Lucas S."/>
            <person name="Copeland A."/>
            <person name="Lapidus A."/>
            <person name="Glavina del Rio T."/>
            <person name="Dalin E."/>
            <person name="Tice H."/>
            <person name="Bruce D."/>
            <person name="Goodwin L."/>
            <person name="Pitluck S."/>
            <person name="Chertkov O."/>
            <person name="Brettin T."/>
            <person name="Detter J.C."/>
            <person name="Han C."/>
            <person name="Larimer F."/>
            <person name="Land M."/>
            <person name="Hauser L."/>
            <person name="Kyrpides N."/>
            <person name="Mikhailova N."/>
            <person name="Balakrishnan V."/>
            <person name="Glasner J."/>
            <person name="Perna N.T."/>
        </authorList>
    </citation>
    <scope>NUCLEOTIDE SEQUENCE [LARGE SCALE GENOMIC DNA]</scope>
    <source>
        <strain>Ech703</strain>
    </source>
</reference>
<feature type="chain" id="PRO_0000413180" description="Modulator protein MzrA">
    <location>
        <begin position="1"/>
        <end position="124"/>
    </location>
</feature>
<feature type="topological domain" description="Cytoplasmic" evidence="1">
    <location>
        <begin position="1"/>
        <end position="7"/>
    </location>
</feature>
<feature type="transmembrane region" description="Helical" evidence="1">
    <location>
        <begin position="8"/>
        <end position="28"/>
    </location>
</feature>
<feature type="topological domain" description="Periplasmic" evidence="1">
    <location>
        <begin position="29"/>
        <end position="124"/>
    </location>
</feature>
<sequence>MINRRMKTGFVFHLLLLLLPLVVLVTSSRRTADDVTLHIIPQHQGAALPDGFYIYQRLNEHGIGIKSITPEDDSIIVRLSSPEQSRAASEVLKSALPQASVIARQPDAIPIWRQKLSQQPFKLG</sequence>
<gene>
    <name evidence="1" type="primary">mzrA</name>
    <name type="ordered locus">Dd703_3389</name>
</gene>